<dbReference type="EC" id="6.3.3.1" evidence="1"/>
<dbReference type="EMBL" id="CP000390">
    <property type="protein sequence ID" value="ABG63359.1"/>
    <property type="molecule type" value="Genomic_DNA"/>
</dbReference>
<dbReference type="SMR" id="Q11GW6"/>
<dbReference type="STRING" id="266779.Meso_1966"/>
<dbReference type="KEGG" id="mes:Meso_1966"/>
<dbReference type="eggNOG" id="COG0150">
    <property type="taxonomic scope" value="Bacteria"/>
</dbReference>
<dbReference type="HOGENOM" id="CLU_047116_0_0_5"/>
<dbReference type="UniPathway" id="UPA00074">
    <property type="reaction ID" value="UER00129"/>
</dbReference>
<dbReference type="GO" id="GO:0005829">
    <property type="term" value="C:cytosol"/>
    <property type="evidence" value="ECO:0007669"/>
    <property type="project" value="TreeGrafter"/>
</dbReference>
<dbReference type="GO" id="GO:0005524">
    <property type="term" value="F:ATP binding"/>
    <property type="evidence" value="ECO:0007669"/>
    <property type="project" value="UniProtKB-KW"/>
</dbReference>
<dbReference type="GO" id="GO:0004637">
    <property type="term" value="F:phosphoribosylamine-glycine ligase activity"/>
    <property type="evidence" value="ECO:0007669"/>
    <property type="project" value="TreeGrafter"/>
</dbReference>
<dbReference type="GO" id="GO:0004641">
    <property type="term" value="F:phosphoribosylformylglycinamidine cyclo-ligase activity"/>
    <property type="evidence" value="ECO:0007669"/>
    <property type="project" value="UniProtKB-UniRule"/>
</dbReference>
<dbReference type="GO" id="GO:0006189">
    <property type="term" value="P:'de novo' IMP biosynthetic process"/>
    <property type="evidence" value="ECO:0007669"/>
    <property type="project" value="UniProtKB-UniRule"/>
</dbReference>
<dbReference type="GO" id="GO:0046084">
    <property type="term" value="P:adenine biosynthetic process"/>
    <property type="evidence" value="ECO:0007669"/>
    <property type="project" value="TreeGrafter"/>
</dbReference>
<dbReference type="CDD" id="cd02196">
    <property type="entry name" value="PurM"/>
    <property type="match status" value="1"/>
</dbReference>
<dbReference type="FunFam" id="3.30.1330.10:FF:000001">
    <property type="entry name" value="Phosphoribosylformylglycinamidine cyclo-ligase"/>
    <property type="match status" value="1"/>
</dbReference>
<dbReference type="FunFam" id="3.90.650.10:FF:000011">
    <property type="entry name" value="Phosphoribosylformylglycinamidine cyclo-ligase"/>
    <property type="match status" value="1"/>
</dbReference>
<dbReference type="Gene3D" id="3.90.650.10">
    <property type="entry name" value="PurM-like C-terminal domain"/>
    <property type="match status" value="1"/>
</dbReference>
<dbReference type="Gene3D" id="3.30.1330.10">
    <property type="entry name" value="PurM-like, N-terminal domain"/>
    <property type="match status" value="1"/>
</dbReference>
<dbReference type="HAMAP" id="MF_00741">
    <property type="entry name" value="AIRS"/>
    <property type="match status" value="1"/>
</dbReference>
<dbReference type="InterPro" id="IPR010918">
    <property type="entry name" value="PurM-like_C_dom"/>
</dbReference>
<dbReference type="InterPro" id="IPR036676">
    <property type="entry name" value="PurM-like_C_sf"/>
</dbReference>
<dbReference type="InterPro" id="IPR016188">
    <property type="entry name" value="PurM-like_N"/>
</dbReference>
<dbReference type="InterPro" id="IPR036921">
    <property type="entry name" value="PurM-like_N_sf"/>
</dbReference>
<dbReference type="InterPro" id="IPR004733">
    <property type="entry name" value="PurM_cligase"/>
</dbReference>
<dbReference type="NCBIfam" id="TIGR00878">
    <property type="entry name" value="purM"/>
    <property type="match status" value="1"/>
</dbReference>
<dbReference type="PANTHER" id="PTHR10520:SF12">
    <property type="entry name" value="TRIFUNCTIONAL PURINE BIOSYNTHETIC PROTEIN ADENOSINE-3"/>
    <property type="match status" value="1"/>
</dbReference>
<dbReference type="PANTHER" id="PTHR10520">
    <property type="entry name" value="TRIFUNCTIONAL PURINE BIOSYNTHETIC PROTEIN ADENOSINE-3-RELATED"/>
    <property type="match status" value="1"/>
</dbReference>
<dbReference type="Pfam" id="PF00586">
    <property type="entry name" value="AIRS"/>
    <property type="match status" value="1"/>
</dbReference>
<dbReference type="Pfam" id="PF02769">
    <property type="entry name" value="AIRS_C"/>
    <property type="match status" value="1"/>
</dbReference>
<dbReference type="SUPFAM" id="SSF56042">
    <property type="entry name" value="PurM C-terminal domain-like"/>
    <property type="match status" value="1"/>
</dbReference>
<dbReference type="SUPFAM" id="SSF55326">
    <property type="entry name" value="PurM N-terminal domain-like"/>
    <property type="match status" value="1"/>
</dbReference>
<evidence type="ECO:0000255" key="1">
    <source>
        <dbReference type="HAMAP-Rule" id="MF_00741"/>
    </source>
</evidence>
<feature type="chain" id="PRO_0000258368" description="Phosphoribosylformylglycinamidine cyclo-ligase">
    <location>
        <begin position="1"/>
        <end position="368"/>
    </location>
</feature>
<name>PUR5_CHESB</name>
<organism>
    <name type="scientific">Chelativorans sp. (strain BNC1)</name>
    <dbReference type="NCBI Taxonomy" id="266779"/>
    <lineage>
        <taxon>Bacteria</taxon>
        <taxon>Pseudomonadati</taxon>
        <taxon>Pseudomonadota</taxon>
        <taxon>Alphaproteobacteria</taxon>
        <taxon>Hyphomicrobiales</taxon>
        <taxon>Phyllobacteriaceae</taxon>
        <taxon>Chelativorans</taxon>
    </lineage>
</organism>
<proteinExistence type="inferred from homology"/>
<gene>
    <name evidence="1" type="primary">purM</name>
    <name type="ordered locus">Meso_1966</name>
</gene>
<reference key="1">
    <citation type="submission" date="2006-06" db="EMBL/GenBank/DDBJ databases">
        <title>Complete sequence of chromosome of Mesorhizobium sp. BNC1.</title>
        <authorList>
            <consortium name="US DOE Joint Genome Institute"/>
            <person name="Copeland A."/>
            <person name="Lucas S."/>
            <person name="Lapidus A."/>
            <person name="Barry K."/>
            <person name="Detter J.C."/>
            <person name="Glavina del Rio T."/>
            <person name="Hammon N."/>
            <person name="Israni S."/>
            <person name="Dalin E."/>
            <person name="Tice H."/>
            <person name="Pitluck S."/>
            <person name="Chertkov O."/>
            <person name="Brettin T."/>
            <person name="Bruce D."/>
            <person name="Han C."/>
            <person name="Tapia R."/>
            <person name="Gilna P."/>
            <person name="Schmutz J."/>
            <person name="Larimer F."/>
            <person name="Land M."/>
            <person name="Hauser L."/>
            <person name="Kyrpides N."/>
            <person name="Mikhailova N."/>
            <person name="Richardson P."/>
        </authorList>
    </citation>
    <scope>NUCLEOTIDE SEQUENCE [LARGE SCALE GENOMIC DNA]</scope>
    <source>
        <strain>BNC1</strain>
    </source>
</reference>
<protein>
    <recommendedName>
        <fullName evidence="1">Phosphoribosylformylglycinamidine cyclo-ligase</fullName>
        <ecNumber evidence="1">6.3.3.1</ecNumber>
    </recommendedName>
    <alternativeName>
        <fullName evidence="1">AIR synthase</fullName>
    </alternativeName>
    <alternativeName>
        <fullName evidence="1">AIRS</fullName>
    </alternativeName>
    <alternativeName>
        <fullName evidence="1">Phosphoribosyl-aminoimidazole synthetase</fullName>
    </alternativeName>
</protein>
<keyword id="KW-0067">ATP-binding</keyword>
<keyword id="KW-0963">Cytoplasm</keyword>
<keyword id="KW-0436">Ligase</keyword>
<keyword id="KW-0547">Nucleotide-binding</keyword>
<keyword id="KW-0658">Purine biosynthesis</keyword>
<accession>Q11GW6</accession>
<comment type="catalytic activity">
    <reaction evidence="1">
        <text>2-formamido-N(1)-(5-O-phospho-beta-D-ribosyl)acetamidine + ATP = 5-amino-1-(5-phospho-beta-D-ribosyl)imidazole + ADP + phosphate + H(+)</text>
        <dbReference type="Rhea" id="RHEA:23032"/>
        <dbReference type="ChEBI" id="CHEBI:15378"/>
        <dbReference type="ChEBI" id="CHEBI:30616"/>
        <dbReference type="ChEBI" id="CHEBI:43474"/>
        <dbReference type="ChEBI" id="CHEBI:137981"/>
        <dbReference type="ChEBI" id="CHEBI:147287"/>
        <dbReference type="ChEBI" id="CHEBI:456216"/>
        <dbReference type="EC" id="6.3.3.1"/>
    </reaction>
</comment>
<comment type="pathway">
    <text evidence="1">Purine metabolism; IMP biosynthesis via de novo pathway; 5-amino-1-(5-phospho-D-ribosyl)imidazole from N(2)-formyl-N(1)-(5-phospho-D-ribosyl)glycinamide: step 2/2.</text>
</comment>
<comment type="subcellular location">
    <subcellularLocation>
        <location evidence="1">Cytoplasm</location>
    </subcellularLocation>
</comment>
<comment type="similarity">
    <text evidence="1">Belongs to the AIR synthase family.</text>
</comment>
<sequence length="368" mass="38519">MPIARERKARLENAMSRKKTGLSYADAGVDIDAGNALVEKIKPLVRATRRPGADGEIGGFGGLFDLKAAGFTDPILIAANDGVGTKLKVAIEAGKHDTVGIDLVAMCVNDLVVQGAEPLFFLDYFATGKLDPDQGAAIVAGIAEGCRQAGCALIGGETAEMPGMYRDGDYDLAGFAVGAAERGRLLPTNDIVEGDVILGLASTGVHSNGFSLVRRIVEVSGLDWNDPAPFDSDRSLAEALLTPTRIYVKPILSAIARTHGIKALAHITGGGFPENIPRVLPPAYAAEIDLEAVNVLPVFSWLAERGGVAAQEMLRTFNCGIGMIAVVAAGQAAQVAAVLQKEGEHVEILGSIVPRRDKGVIYQGALEL</sequence>